<keyword id="KW-0030">Aminoacyl-tRNA synthetase</keyword>
<keyword id="KW-0067">ATP-binding</keyword>
<keyword id="KW-0963">Cytoplasm</keyword>
<keyword id="KW-0436">Ligase</keyword>
<keyword id="KW-0479">Metal-binding</keyword>
<keyword id="KW-0547">Nucleotide-binding</keyword>
<keyword id="KW-0648">Protein biosynthesis</keyword>
<keyword id="KW-0694">RNA-binding</keyword>
<keyword id="KW-0820">tRNA-binding</keyword>
<keyword id="KW-0862">Zinc</keyword>
<organism>
    <name type="scientific">Prochlorococcus marinus (strain MIT 9303)</name>
    <dbReference type="NCBI Taxonomy" id="59922"/>
    <lineage>
        <taxon>Bacteria</taxon>
        <taxon>Bacillati</taxon>
        <taxon>Cyanobacteriota</taxon>
        <taxon>Cyanophyceae</taxon>
        <taxon>Synechococcales</taxon>
        <taxon>Prochlorococcaceae</taxon>
        <taxon>Prochlorococcus</taxon>
    </lineage>
</organism>
<gene>
    <name evidence="1" type="primary">alaS</name>
    <name type="ordered locus">P9303_28371</name>
</gene>
<proteinExistence type="inferred from homology"/>
<sequence>MAVARSLRSGESGPRTGSEIRTAFLTFFAERAHQVIPSASLVPEDPTVLLTIAGMLPFKPVFMGQAERPAPRATSSQKCIRTNDIENVGRTARHHTFFEMLGNFSFGDYFKQQAIEWAWELSTEVFGLNPKNLVVSVFREDDEAEAIWRDVVGVNPKRIIRMDEADNFWASGPTGPCGPCSEIYYDFKPDLGNDDIDLEDDGRFVEFYNLVFMQYNRDGEGNLTPLANRNIDTGMGLERMAQILQGVPNNYETDIIYPLIETAAGLAGLDYQKLDDKGKTSFKVIGDHCRAITHLICDGVTASNLGRGYIMRRLLRRVVRHGRLVGIEKPFLQAMGEAAIALMVEAYPQLEERRKLILAELNREEARFLETLERGEKVLADVLVANPQMISGGQAFELYDTYGFPLELTQEIAEEHGLTVDLQGFEQAMDQQRQRAKAAAVSIDLTLQGAIEQMAAELEATRFKGYQVLEQPCCVLALVVNGESAERASAGDNVQIVLDTTPFYGESGGQVGDHGVLSGEGSGGNGVIVAVDDVSRHRNVFVHFGRIERGTLALGDLVNAQVDRACRRRAQANHTATHLLQAALKQVVDSGIGQAGSLVDFDRLRFDFHCSRAVTAKELEQIEALINGWIMESHDLIVEEMSIQEAKAAGAVAMFGEKYADVVRVVDVPGVSMELCGGTHVANTAEIGLFKIVAESSVAAGIRRIEAVAGPAVLAYLNERDVVVKELGDRFKAQPSEIIERVISLQEELKSSQKALTAARAELAVAKSAALATQAVAVGEYQLLVARLDGVEGAGLQNAAQGLLDQLGDATAVVLGGLPDPSDEGKVILVAAFGKQVIAQGQQAGKFIGSIAKRCGGGGGGRPNLAQAGGRDGAALDGALEAAKVELKQSLG</sequence>
<name>SYA_PROM3</name>
<evidence type="ECO:0000255" key="1">
    <source>
        <dbReference type="HAMAP-Rule" id="MF_00036"/>
    </source>
</evidence>
<evidence type="ECO:0000305" key="2"/>
<dbReference type="EC" id="6.1.1.7" evidence="1"/>
<dbReference type="EMBL" id="CP000554">
    <property type="protein sequence ID" value="ABM79567.1"/>
    <property type="status" value="ALT_INIT"/>
    <property type="molecule type" value="Genomic_DNA"/>
</dbReference>
<dbReference type="RefSeq" id="WP_041375266.1">
    <property type="nucleotide sequence ID" value="NC_008820.1"/>
</dbReference>
<dbReference type="SMR" id="A2CDK7"/>
<dbReference type="STRING" id="59922.P9303_28371"/>
<dbReference type="KEGG" id="pmf:P9303_28371"/>
<dbReference type="HOGENOM" id="CLU_004485_1_1_3"/>
<dbReference type="BioCyc" id="PMAR59922:G1G80-2492-MONOMER"/>
<dbReference type="Proteomes" id="UP000002274">
    <property type="component" value="Chromosome"/>
</dbReference>
<dbReference type="GO" id="GO:0005829">
    <property type="term" value="C:cytosol"/>
    <property type="evidence" value="ECO:0007669"/>
    <property type="project" value="TreeGrafter"/>
</dbReference>
<dbReference type="GO" id="GO:0004813">
    <property type="term" value="F:alanine-tRNA ligase activity"/>
    <property type="evidence" value="ECO:0007669"/>
    <property type="project" value="UniProtKB-UniRule"/>
</dbReference>
<dbReference type="GO" id="GO:0002161">
    <property type="term" value="F:aminoacyl-tRNA deacylase activity"/>
    <property type="evidence" value="ECO:0007669"/>
    <property type="project" value="TreeGrafter"/>
</dbReference>
<dbReference type="GO" id="GO:0005524">
    <property type="term" value="F:ATP binding"/>
    <property type="evidence" value="ECO:0007669"/>
    <property type="project" value="UniProtKB-UniRule"/>
</dbReference>
<dbReference type="GO" id="GO:0000049">
    <property type="term" value="F:tRNA binding"/>
    <property type="evidence" value="ECO:0007669"/>
    <property type="project" value="UniProtKB-KW"/>
</dbReference>
<dbReference type="GO" id="GO:0008270">
    <property type="term" value="F:zinc ion binding"/>
    <property type="evidence" value="ECO:0007669"/>
    <property type="project" value="UniProtKB-UniRule"/>
</dbReference>
<dbReference type="GO" id="GO:0006419">
    <property type="term" value="P:alanyl-tRNA aminoacylation"/>
    <property type="evidence" value="ECO:0007669"/>
    <property type="project" value="UniProtKB-UniRule"/>
</dbReference>
<dbReference type="CDD" id="cd00673">
    <property type="entry name" value="AlaRS_core"/>
    <property type="match status" value="1"/>
</dbReference>
<dbReference type="FunFam" id="2.40.30.130:FF:000001">
    <property type="entry name" value="Alanine--tRNA ligase"/>
    <property type="match status" value="1"/>
</dbReference>
<dbReference type="FunFam" id="3.10.310.40:FF:000001">
    <property type="entry name" value="Alanine--tRNA ligase"/>
    <property type="match status" value="1"/>
</dbReference>
<dbReference type="FunFam" id="3.30.54.20:FF:000001">
    <property type="entry name" value="Alanine--tRNA ligase"/>
    <property type="match status" value="1"/>
</dbReference>
<dbReference type="FunFam" id="3.30.930.10:FF:000004">
    <property type="entry name" value="Alanine--tRNA ligase"/>
    <property type="match status" value="1"/>
</dbReference>
<dbReference type="FunFam" id="3.30.980.10:FF:000004">
    <property type="entry name" value="Alanine--tRNA ligase, cytoplasmic"/>
    <property type="match status" value="1"/>
</dbReference>
<dbReference type="Gene3D" id="2.40.30.130">
    <property type="match status" value="1"/>
</dbReference>
<dbReference type="Gene3D" id="3.10.310.40">
    <property type="match status" value="1"/>
</dbReference>
<dbReference type="Gene3D" id="3.30.54.20">
    <property type="match status" value="1"/>
</dbReference>
<dbReference type="Gene3D" id="6.10.250.550">
    <property type="match status" value="1"/>
</dbReference>
<dbReference type="Gene3D" id="3.30.930.10">
    <property type="entry name" value="Bira Bifunctional Protein, Domain 2"/>
    <property type="match status" value="1"/>
</dbReference>
<dbReference type="Gene3D" id="3.30.980.10">
    <property type="entry name" value="Threonyl-trna Synthetase, Chain A, domain 2"/>
    <property type="match status" value="1"/>
</dbReference>
<dbReference type="HAMAP" id="MF_00036_B">
    <property type="entry name" value="Ala_tRNA_synth_B"/>
    <property type="match status" value="1"/>
</dbReference>
<dbReference type="InterPro" id="IPR045864">
    <property type="entry name" value="aa-tRNA-synth_II/BPL/LPL"/>
</dbReference>
<dbReference type="InterPro" id="IPR002318">
    <property type="entry name" value="Ala-tRNA-lgiase_IIc"/>
</dbReference>
<dbReference type="InterPro" id="IPR018162">
    <property type="entry name" value="Ala-tRNA-ligase_IIc_anticod-bd"/>
</dbReference>
<dbReference type="InterPro" id="IPR018165">
    <property type="entry name" value="Ala-tRNA-synth_IIc_core"/>
</dbReference>
<dbReference type="InterPro" id="IPR018164">
    <property type="entry name" value="Ala-tRNA-synth_IIc_N"/>
</dbReference>
<dbReference type="InterPro" id="IPR050058">
    <property type="entry name" value="Ala-tRNA_ligase"/>
</dbReference>
<dbReference type="InterPro" id="IPR023033">
    <property type="entry name" value="Ala_tRNA_ligase_euk/bac"/>
</dbReference>
<dbReference type="InterPro" id="IPR003156">
    <property type="entry name" value="DHHA1_dom"/>
</dbReference>
<dbReference type="InterPro" id="IPR018163">
    <property type="entry name" value="Thr/Ala-tRNA-synth_IIc_edit"/>
</dbReference>
<dbReference type="InterPro" id="IPR009000">
    <property type="entry name" value="Transl_B-barrel_sf"/>
</dbReference>
<dbReference type="InterPro" id="IPR012947">
    <property type="entry name" value="tRNA_SAD"/>
</dbReference>
<dbReference type="NCBIfam" id="TIGR00344">
    <property type="entry name" value="alaS"/>
    <property type="match status" value="1"/>
</dbReference>
<dbReference type="PANTHER" id="PTHR11777:SF9">
    <property type="entry name" value="ALANINE--TRNA LIGASE, CYTOPLASMIC"/>
    <property type="match status" value="1"/>
</dbReference>
<dbReference type="PANTHER" id="PTHR11777">
    <property type="entry name" value="ALANYL-TRNA SYNTHETASE"/>
    <property type="match status" value="1"/>
</dbReference>
<dbReference type="Pfam" id="PF02272">
    <property type="entry name" value="DHHA1"/>
    <property type="match status" value="1"/>
</dbReference>
<dbReference type="Pfam" id="PF01411">
    <property type="entry name" value="tRNA-synt_2c"/>
    <property type="match status" value="1"/>
</dbReference>
<dbReference type="Pfam" id="PF07973">
    <property type="entry name" value="tRNA_SAD"/>
    <property type="match status" value="1"/>
</dbReference>
<dbReference type="PRINTS" id="PR00980">
    <property type="entry name" value="TRNASYNTHALA"/>
</dbReference>
<dbReference type="SMART" id="SM00863">
    <property type="entry name" value="tRNA_SAD"/>
    <property type="match status" value="1"/>
</dbReference>
<dbReference type="SUPFAM" id="SSF55681">
    <property type="entry name" value="Class II aaRS and biotin synthetases"/>
    <property type="match status" value="1"/>
</dbReference>
<dbReference type="SUPFAM" id="SSF101353">
    <property type="entry name" value="Putative anticodon-binding domain of alanyl-tRNA synthetase (AlaRS)"/>
    <property type="match status" value="1"/>
</dbReference>
<dbReference type="SUPFAM" id="SSF55186">
    <property type="entry name" value="ThrRS/AlaRS common domain"/>
    <property type="match status" value="1"/>
</dbReference>
<dbReference type="SUPFAM" id="SSF50447">
    <property type="entry name" value="Translation proteins"/>
    <property type="match status" value="1"/>
</dbReference>
<dbReference type="PROSITE" id="PS50860">
    <property type="entry name" value="AA_TRNA_LIGASE_II_ALA"/>
    <property type="match status" value="1"/>
</dbReference>
<reference key="1">
    <citation type="journal article" date="2007" name="PLoS Genet.">
        <title>Patterns and implications of gene gain and loss in the evolution of Prochlorococcus.</title>
        <authorList>
            <person name="Kettler G.C."/>
            <person name="Martiny A.C."/>
            <person name="Huang K."/>
            <person name="Zucker J."/>
            <person name="Coleman M.L."/>
            <person name="Rodrigue S."/>
            <person name="Chen F."/>
            <person name="Lapidus A."/>
            <person name="Ferriera S."/>
            <person name="Johnson J."/>
            <person name="Steglich C."/>
            <person name="Church G.M."/>
            <person name="Richardson P."/>
            <person name="Chisholm S.W."/>
        </authorList>
    </citation>
    <scope>NUCLEOTIDE SEQUENCE [LARGE SCALE GENOMIC DNA]</scope>
    <source>
        <strain>MIT 9303</strain>
    </source>
</reference>
<feature type="chain" id="PRO_0000347727" description="Alanine--tRNA ligase">
    <location>
        <begin position="1"/>
        <end position="892"/>
    </location>
</feature>
<feature type="binding site" evidence="1">
    <location>
        <position position="574"/>
    </location>
    <ligand>
        <name>Zn(2+)</name>
        <dbReference type="ChEBI" id="CHEBI:29105"/>
    </ligand>
</feature>
<feature type="binding site" evidence="1">
    <location>
        <position position="578"/>
    </location>
    <ligand>
        <name>Zn(2+)</name>
        <dbReference type="ChEBI" id="CHEBI:29105"/>
    </ligand>
</feature>
<feature type="binding site" evidence="1">
    <location>
        <position position="676"/>
    </location>
    <ligand>
        <name>Zn(2+)</name>
        <dbReference type="ChEBI" id="CHEBI:29105"/>
    </ligand>
</feature>
<feature type="binding site" evidence="1">
    <location>
        <position position="680"/>
    </location>
    <ligand>
        <name>Zn(2+)</name>
        <dbReference type="ChEBI" id="CHEBI:29105"/>
    </ligand>
</feature>
<comment type="function">
    <text evidence="1">Catalyzes the attachment of alanine to tRNA(Ala) in a two-step reaction: alanine is first activated by ATP to form Ala-AMP and then transferred to the acceptor end of tRNA(Ala). Also edits incorrectly charged Ser-tRNA(Ala) and Gly-tRNA(Ala) via its editing domain.</text>
</comment>
<comment type="catalytic activity">
    <reaction evidence="1">
        <text>tRNA(Ala) + L-alanine + ATP = L-alanyl-tRNA(Ala) + AMP + diphosphate</text>
        <dbReference type="Rhea" id="RHEA:12540"/>
        <dbReference type="Rhea" id="RHEA-COMP:9657"/>
        <dbReference type="Rhea" id="RHEA-COMP:9923"/>
        <dbReference type="ChEBI" id="CHEBI:30616"/>
        <dbReference type="ChEBI" id="CHEBI:33019"/>
        <dbReference type="ChEBI" id="CHEBI:57972"/>
        <dbReference type="ChEBI" id="CHEBI:78442"/>
        <dbReference type="ChEBI" id="CHEBI:78497"/>
        <dbReference type="ChEBI" id="CHEBI:456215"/>
        <dbReference type="EC" id="6.1.1.7"/>
    </reaction>
</comment>
<comment type="cofactor">
    <cofactor evidence="1">
        <name>Zn(2+)</name>
        <dbReference type="ChEBI" id="CHEBI:29105"/>
    </cofactor>
    <text evidence="1">Binds 1 zinc ion per subunit.</text>
</comment>
<comment type="subcellular location">
    <subcellularLocation>
        <location evidence="1">Cytoplasm</location>
    </subcellularLocation>
</comment>
<comment type="domain">
    <text evidence="1">Consists of three domains; the N-terminal catalytic domain, the editing domain and the C-terminal C-Ala domain. The editing domain removes incorrectly charged amino acids, while the C-Ala domain, along with tRNA(Ala), serves as a bridge to cooperatively bring together the editing and aminoacylation centers thus stimulating deacylation of misacylated tRNAs.</text>
</comment>
<comment type="similarity">
    <text evidence="1">Belongs to the class-II aminoacyl-tRNA synthetase family.</text>
</comment>
<comment type="sequence caution" evidence="2">
    <conflict type="erroneous initiation">
        <sequence resource="EMBL-CDS" id="ABM79567"/>
    </conflict>
</comment>
<protein>
    <recommendedName>
        <fullName evidence="1">Alanine--tRNA ligase</fullName>
        <ecNumber evidence="1">6.1.1.7</ecNumber>
    </recommendedName>
    <alternativeName>
        <fullName evidence="1">Alanyl-tRNA synthetase</fullName>
        <shortName evidence="1">AlaRS</shortName>
    </alternativeName>
</protein>
<accession>A2CDK7</accession>